<name>TRPA_MYCLE</name>
<keyword id="KW-0028">Amino-acid biosynthesis</keyword>
<keyword id="KW-0057">Aromatic amino acid biosynthesis</keyword>
<keyword id="KW-0456">Lyase</keyword>
<keyword id="KW-1185">Reference proteome</keyword>
<keyword id="KW-0822">Tryptophan biosynthesis</keyword>
<reference key="1">
    <citation type="journal article" date="2001" name="Nature">
        <title>Massive gene decay in the leprosy bacillus.</title>
        <authorList>
            <person name="Cole S.T."/>
            <person name="Eiglmeier K."/>
            <person name="Parkhill J."/>
            <person name="James K.D."/>
            <person name="Thomson N.R."/>
            <person name="Wheeler P.R."/>
            <person name="Honore N."/>
            <person name="Garnier T."/>
            <person name="Churcher C.M."/>
            <person name="Harris D.E."/>
            <person name="Mungall K.L."/>
            <person name="Basham D."/>
            <person name="Brown D."/>
            <person name="Chillingworth T."/>
            <person name="Connor R."/>
            <person name="Davies R.M."/>
            <person name="Devlin K."/>
            <person name="Duthoy S."/>
            <person name="Feltwell T."/>
            <person name="Fraser A."/>
            <person name="Hamlin N."/>
            <person name="Holroyd S."/>
            <person name="Hornsby T."/>
            <person name="Jagels K."/>
            <person name="Lacroix C."/>
            <person name="Maclean J."/>
            <person name="Moule S."/>
            <person name="Murphy L.D."/>
            <person name="Oliver K."/>
            <person name="Quail M.A."/>
            <person name="Rajandream M.A."/>
            <person name="Rutherford K.M."/>
            <person name="Rutter S."/>
            <person name="Seeger K."/>
            <person name="Simon S."/>
            <person name="Simmonds M."/>
            <person name="Skelton J."/>
            <person name="Squares R."/>
            <person name="Squares S."/>
            <person name="Stevens K."/>
            <person name="Taylor K."/>
            <person name="Whitehead S."/>
            <person name="Woodward J.R."/>
            <person name="Barrell B.G."/>
        </authorList>
    </citation>
    <scope>NUCLEOTIDE SEQUENCE [LARGE SCALE GENOMIC DNA]</scope>
    <source>
        <strain>TN</strain>
    </source>
</reference>
<evidence type="ECO:0000255" key="1">
    <source>
        <dbReference type="HAMAP-Rule" id="MF_00131"/>
    </source>
</evidence>
<dbReference type="EC" id="4.2.1.20" evidence="1"/>
<dbReference type="EMBL" id="AL583921">
    <property type="protein sequence ID" value="CAC31654.1"/>
    <property type="molecule type" value="Genomic_DNA"/>
</dbReference>
<dbReference type="PIR" id="C87068">
    <property type="entry name" value="C87068"/>
</dbReference>
<dbReference type="RefSeq" id="NP_301918.1">
    <property type="nucleotide sequence ID" value="NC_002677.1"/>
</dbReference>
<dbReference type="RefSeq" id="WP_010908239.1">
    <property type="nucleotide sequence ID" value="NC_002677.1"/>
</dbReference>
<dbReference type="SMR" id="Q9CC53"/>
<dbReference type="STRING" id="272631.gene:17575105"/>
<dbReference type="KEGG" id="mle:ML1273"/>
<dbReference type="PATRIC" id="fig|272631.5.peg.2337"/>
<dbReference type="Leproma" id="ML1273"/>
<dbReference type="eggNOG" id="COG0159">
    <property type="taxonomic scope" value="Bacteria"/>
</dbReference>
<dbReference type="HOGENOM" id="CLU_016734_0_0_11"/>
<dbReference type="OrthoDB" id="9804578at2"/>
<dbReference type="UniPathway" id="UPA00035">
    <property type="reaction ID" value="UER00044"/>
</dbReference>
<dbReference type="Proteomes" id="UP000000806">
    <property type="component" value="Chromosome"/>
</dbReference>
<dbReference type="GO" id="GO:0005829">
    <property type="term" value="C:cytosol"/>
    <property type="evidence" value="ECO:0007669"/>
    <property type="project" value="TreeGrafter"/>
</dbReference>
<dbReference type="GO" id="GO:0004834">
    <property type="term" value="F:tryptophan synthase activity"/>
    <property type="evidence" value="ECO:0007669"/>
    <property type="project" value="UniProtKB-UniRule"/>
</dbReference>
<dbReference type="CDD" id="cd04724">
    <property type="entry name" value="Tryptophan_synthase_alpha"/>
    <property type="match status" value="1"/>
</dbReference>
<dbReference type="FunFam" id="3.20.20.70:FF:000037">
    <property type="entry name" value="Tryptophan synthase alpha chain"/>
    <property type="match status" value="1"/>
</dbReference>
<dbReference type="Gene3D" id="3.20.20.70">
    <property type="entry name" value="Aldolase class I"/>
    <property type="match status" value="1"/>
</dbReference>
<dbReference type="HAMAP" id="MF_00131">
    <property type="entry name" value="Trp_synth_alpha"/>
    <property type="match status" value="1"/>
</dbReference>
<dbReference type="InterPro" id="IPR013785">
    <property type="entry name" value="Aldolase_TIM"/>
</dbReference>
<dbReference type="InterPro" id="IPR011060">
    <property type="entry name" value="RibuloseP-bd_barrel"/>
</dbReference>
<dbReference type="InterPro" id="IPR018204">
    <property type="entry name" value="Trp_synthase_alpha_AS"/>
</dbReference>
<dbReference type="InterPro" id="IPR002028">
    <property type="entry name" value="Trp_synthase_suA"/>
</dbReference>
<dbReference type="NCBIfam" id="TIGR00262">
    <property type="entry name" value="trpA"/>
    <property type="match status" value="1"/>
</dbReference>
<dbReference type="PANTHER" id="PTHR43406:SF1">
    <property type="entry name" value="TRYPTOPHAN SYNTHASE ALPHA CHAIN, CHLOROPLASTIC"/>
    <property type="match status" value="1"/>
</dbReference>
<dbReference type="PANTHER" id="PTHR43406">
    <property type="entry name" value="TRYPTOPHAN SYNTHASE, ALPHA CHAIN"/>
    <property type="match status" value="1"/>
</dbReference>
<dbReference type="Pfam" id="PF00290">
    <property type="entry name" value="Trp_syntA"/>
    <property type="match status" value="1"/>
</dbReference>
<dbReference type="SUPFAM" id="SSF51366">
    <property type="entry name" value="Ribulose-phoshate binding barrel"/>
    <property type="match status" value="1"/>
</dbReference>
<dbReference type="PROSITE" id="PS00167">
    <property type="entry name" value="TRP_SYNTHASE_ALPHA"/>
    <property type="match status" value="1"/>
</dbReference>
<protein>
    <recommendedName>
        <fullName evidence="1">Tryptophan synthase alpha chain</fullName>
        <ecNumber evidence="1">4.2.1.20</ecNumber>
    </recommendedName>
</protein>
<proteinExistence type="inferred from homology"/>
<gene>
    <name evidence="1" type="primary">trpA</name>
    <name type="ordered locus">ML1273</name>
</gene>
<sequence length="270" mass="28330">MMVLEQSETSRLGPVFDSCRADNRAALIGYLPTGYPDVPTSVDAMIELVESGCDIIEVGVPYSDPGMDGPTIARATEVALRGGVRVRDTLAAVEAISQAGGRAVVMTYWNPVLRYGVCAFARDLESAGGHGLVTPDLIPDEARQWIAASEKHRLDRIFLVAPSSTPHRLVTTVGASRGFVYAVSVMGVTGARDAVSQVVPELVARVKAVSDIAVGVGLGVRSREQAAQIGGYADGVIVGSALVSALGDGLPRLRALAEELAAGVRQRTFM</sequence>
<organism>
    <name type="scientific">Mycobacterium leprae (strain TN)</name>
    <dbReference type="NCBI Taxonomy" id="272631"/>
    <lineage>
        <taxon>Bacteria</taxon>
        <taxon>Bacillati</taxon>
        <taxon>Actinomycetota</taxon>
        <taxon>Actinomycetes</taxon>
        <taxon>Mycobacteriales</taxon>
        <taxon>Mycobacteriaceae</taxon>
        <taxon>Mycobacterium</taxon>
    </lineage>
</organism>
<feature type="chain" id="PRO_0000098809" description="Tryptophan synthase alpha chain">
    <location>
        <begin position="1"/>
        <end position="270"/>
    </location>
</feature>
<feature type="active site" description="Proton acceptor" evidence="1">
    <location>
        <position position="57"/>
    </location>
</feature>
<feature type="active site" description="Proton acceptor" evidence="1">
    <location>
        <position position="68"/>
    </location>
</feature>
<accession>Q9CC53</accession>
<comment type="function">
    <text evidence="1">The alpha subunit is responsible for the aldol cleavage of indoleglycerol phosphate to indole and glyceraldehyde 3-phosphate.</text>
</comment>
<comment type="catalytic activity">
    <reaction evidence="1">
        <text>(1S,2R)-1-C-(indol-3-yl)glycerol 3-phosphate + L-serine = D-glyceraldehyde 3-phosphate + L-tryptophan + H2O</text>
        <dbReference type="Rhea" id="RHEA:10532"/>
        <dbReference type="ChEBI" id="CHEBI:15377"/>
        <dbReference type="ChEBI" id="CHEBI:33384"/>
        <dbReference type="ChEBI" id="CHEBI:57912"/>
        <dbReference type="ChEBI" id="CHEBI:58866"/>
        <dbReference type="ChEBI" id="CHEBI:59776"/>
        <dbReference type="EC" id="4.2.1.20"/>
    </reaction>
</comment>
<comment type="pathway">
    <text evidence="1">Amino-acid biosynthesis; L-tryptophan biosynthesis; L-tryptophan from chorismate: step 5/5.</text>
</comment>
<comment type="subunit">
    <text evidence="1">Tetramer of two alpha and two beta chains.</text>
</comment>
<comment type="similarity">
    <text evidence="1">Belongs to the TrpA family.</text>
</comment>